<dbReference type="EC" id="2.5.1.7" evidence="1"/>
<dbReference type="EMBL" id="CR378673">
    <property type="protein sequence ID" value="CAG21548.1"/>
    <property type="molecule type" value="Genomic_DNA"/>
</dbReference>
<dbReference type="SMR" id="Q6LMC9"/>
<dbReference type="STRING" id="298386.PBPRA3242"/>
<dbReference type="KEGG" id="ppr:PBPRA3242"/>
<dbReference type="eggNOG" id="COG0766">
    <property type="taxonomic scope" value="Bacteria"/>
</dbReference>
<dbReference type="HOGENOM" id="CLU_027387_0_0_6"/>
<dbReference type="UniPathway" id="UPA00219"/>
<dbReference type="Proteomes" id="UP000000593">
    <property type="component" value="Chromosome 1"/>
</dbReference>
<dbReference type="GO" id="GO:0005737">
    <property type="term" value="C:cytoplasm"/>
    <property type="evidence" value="ECO:0007669"/>
    <property type="project" value="UniProtKB-SubCell"/>
</dbReference>
<dbReference type="GO" id="GO:0008760">
    <property type="term" value="F:UDP-N-acetylglucosamine 1-carboxyvinyltransferase activity"/>
    <property type="evidence" value="ECO:0007669"/>
    <property type="project" value="UniProtKB-UniRule"/>
</dbReference>
<dbReference type="GO" id="GO:0051301">
    <property type="term" value="P:cell division"/>
    <property type="evidence" value="ECO:0007669"/>
    <property type="project" value="UniProtKB-KW"/>
</dbReference>
<dbReference type="GO" id="GO:0071555">
    <property type="term" value="P:cell wall organization"/>
    <property type="evidence" value="ECO:0007669"/>
    <property type="project" value="UniProtKB-KW"/>
</dbReference>
<dbReference type="GO" id="GO:0009252">
    <property type="term" value="P:peptidoglycan biosynthetic process"/>
    <property type="evidence" value="ECO:0007669"/>
    <property type="project" value="UniProtKB-UniRule"/>
</dbReference>
<dbReference type="GO" id="GO:0008360">
    <property type="term" value="P:regulation of cell shape"/>
    <property type="evidence" value="ECO:0007669"/>
    <property type="project" value="UniProtKB-KW"/>
</dbReference>
<dbReference type="GO" id="GO:0019277">
    <property type="term" value="P:UDP-N-acetylgalactosamine biosynthetic process"/>
    <property type="evidence" value="ECO:0007669"/>
    <property type="project" value="InterPro"/>
</dbReference>
<dbReference type="CDD" id="cd01555">
    <property type="entry name" value="UdpNAET"/>
    <property type="match status" value="1"/>
</dbReference>
<dbReference type="FunFam" id="3.65.10.10:FF:000001">
    <property type="entry name" value="UDP-N-acetylglucosamine 1-carboxyvinyltransferase"/>
    <property type="match status" value="1"/>
</dbReference>
<dbReference type="Gene3D" id="3.65.10.10">
    <property type="entry name" value="Enolpyruvate transferase domain"/>
    <property type="match status" value="2"/>
</dbReference>
<dbReference type="HAMAP" id="MF_00111">
    <property type="entry name" value="MurA"/>
    <property type="match status" value="1"/>
</dbReference>
<dbReference type="InterPro" id="IPR001986">
    <property type="entry name" value="Enolpyruvate_Tfrase_dom"/>
</dbReference>
<dbReference type="InterPro" id="IPR036968">
    <property type="entry name" value="Enolpyruvate_Tfrase_sf"/>
</dbReference>
<dbReference type="InterPro" id="IPR050068">
    <property type="entry name" value="MurA_subfamily"/>
</dbReference>
<dbReference type="InterPro" id="IPR013792">
    <property type="entry name" value="RNA3'P_cycl/enolpyr_Trfase_a/b"/>
</dbReference>
<dbReference type="InterPro" id="IPR005750">
    <property type="entry name" value="UDP_GlcNAc_COvinyl_MurA"/>
</dbReference>
<dbReference type="NCBIfam" id="TIGR01072">
    <property type="entry name" value="murA"/>
    <property type="match status" value="1"/>
</dbReference>
<dbReference type="NCBIfam" id="NF006873">
    <property type="entry name" value="PRK09369.1"/>
    <property type="match status" value="1"/>
</dbReference>
<dbReference type="PANTHER" id="PTHR43783">
    <property type="entry name" value="UDP-N-ACETYLGLUCOSAMINE 1-CARBOXYVINYLTRANSFERASE"/>
    <property type="match status" value="1"/>
</dbReference>
<dbReference type="PANTHER" id="PTHR43783:SF1">
    <property type="entry name" value="UDP-N-ACETYLGLUCOSAMINE 1-CARBOXYVINYLTRANSFERASE"/>
    <property type="match status" value="1"/>
</dbReference>
<dbReference type="Pfam" id="PF00275">
    <property type="entry name" value="EPSP_synthase"/>
    <property type="match status" value="1"/>
</dbReference>
<dbReference type="SUPFAM" id="SSF55205">
    <property type="entry name" value="EPT/RTPC-like"/>
    <property type="match status" value="1"/>
</dbReference>
<organism>
    <name type="scientific">Photobacterium profundum (strain SS9)</name>
    <dbReference type="NCBI Taxonomy" id="298386"/>
    <lineage>
        <taxon>Bacteria</taxon>
        <taxon>Pseudomonadati</taxon>
        <taxon>Pseudomonadota</taxon>
        <taxon>Gammaproteobacteria</taxon>
        <taxon>Vibrionales</taxon>
        <taxon>Vibrionaceae</taxon>
        <taxon>Photobacterium</taxon>
    </lineage>
</organism>
<evidence type="ECO:0000255" key="1">
    <source>
        <dbReference type="HAMAP-Rule" id="MF_00111"/>
    </source>
</evidence>
<keyword id="KW-0131">Cell cycle</keyword>
<keyword id="KW-0132">Cell division</keyword>
<keyword id="KW-0133">Cell shape</keyword>
<keyword id="KW-0961">Cell wall biogenesis/degradation</keyword>
<keyword id="KW-0963">Cytoplasm</keyword>
<keyword id="KW-0573">Peptidoglycan synthesis</keyword>
<keyword id="KW-0670">Pyruvate</keyword>
<keyword id="KW-1185">Reference proteome</keyword>
<keyword id="KW-0808">Transferase</keyword>
<accession>Q6LMC9</accession>
<protein>
    <recommendedName>
        <fullName evidence="1">UDP-N-acetylglucosamine 1-carboxyvinyltransferase</fullName>
        <ecNumber evidence="1">2.5.1.7</ecNumber>
    </recommendedName>
    <alternativeName>
        <fullName evidence="1">Enoylpyruvate transferase</fullName>
    </alternativeName>
    <alternativeName>
        <fullName evidence="1">UDP-N-acetylglucosamine enolpyruvyl transferase</fullName>
        <shortName evidence="1">EPT</shortName>
    </alternativeName>
</protein>
<gene>
    <name evidence="1" type="primary">murA</name>
    <name type="ordered locus">PBPRA3242</name>
</gene>
<name>MURA_PHOPR</name>
<proteinExistence type="inferred from homology"/>
<comment type="function">
    <text evidence="1">Cell wall formation. Adds enolpyruvyl to UDP-N-acetylglucosamine.</text>
</comment>
<comment type="catalytic activity">
    <reaction evidence="1">
        <text>phosphoenolpyruvate + UDP-N-acetyl-alpha-D-glucosamine = UDP-N-acetyl-3-O-(1-carboxyvinyl)-alpha-D-glucosamine + phosphate</text>
        <dbReference type="Rhea" id="RHEA:18681"/>
        <dbReference type="ChEBI" id="CHEBI:43474"/>
        <dbReference type="ChEBI" id="CHEBI:57705"/>
        <dbReference type="ChEBI" id="CHEBI:58702"/>
        <dbReference type="ChEBI" id="CHEBI:68483"/>
        <dbReference type="EC" id="2.5.1.7"/>
    </reaction>
</comment>
<comment type="pathway">
    <text evidence="1">Cell wall biogenesis; peptidoglycan biosynthesis.</text>
</comment>
<comment type="subcellular location">
    <subcellularLocation>
        <location evidence="1">Cytoplasm</location>
    </subcellularLocation>
</comment>
<comment type="similarity">
    <text evidence="1">Belongs to the EPSP synthase family. MurA subfamily.</text>
</comment>
<feature type="chain" id="PRO_0000231237" description="UDP-N-acetylglucosamine 1-carboxyvinyltransferase">
    <location>
        <begin position="1"/>
        <end position="420"/>
    </location>
</feature>
<feature type="active site" description="Proton donor" evidence="1">
    <location>
        <position position="116"/>
    </location>
</feature>
<feature type="binding site" evidence="1">
    <location>
        <begin position="23"/>
        <end position="24"/>
    </location>
    <ligand>
        <name>phosphoenolpyruvate</name>
        <dbReference type="ChEBI" id="CHEBI:58702"/>
    </ligand>
</feature>
<feature type="binding site" evidence="1">
    <location>
        <position position="92"/>
    </location>
    <ligand>
        <name>UDP-N-acetyl-alpha-D-glucosamine</name>
        <dbReference type="ChEBI" id="CHEBI:57705"/>
    </ligand>
</feature>
<feature type="binding site" evidence="1">
    <location>
        <begin position="121"/>
        <end position="125"/>
    </location>
    <ligand>
        <name>UDP-N-acetyl-alpha-D-glucosamine</name>
        <dbReference type="ChEBI" id="CHEBI:57705"/>
    </ligand>
</feature>
<feature type="binding site" evidence="1">
    <location>
        <begin position="161"/>
        <end position="164"/>
    </location>
    <ligand>
        <name>UDP-N-acetyl-alpha-D-glucosamine</name>
        <dbReference type="ChEBI" id="CHEBI:57705"/>
    </ligand>
</feature>
<feature type="binding site" evidence="1">
    <location>
        <position position="306"/>
    </location>
    <ligand>
        <name>UDP-N-acetyl-alpha-D-glucosamine</name>
        <dbReference type="ChEBI" id="CHEBI:57705"/>
    </ligand>
</feature>
<feature type="binding site" evidence="1">
    <location>
        <position position="328"/>
    </location>
    <ligand>
        <name>UDP-N-acetyl-alpha-D-glucosamine</name>
        <dbReference type="ChEBI" id="CHEBI:57705"/>
    </ligand>
</feature>
<feature type="modified residue" description="2-(S-cysteinyl)pyruvic acid O-phosphothioketal" evidence="1">
    <location>
        <position position="116"/>
    </location>
</feature>
<reference key="1">
    <citation type="journal article" date="2005" name="Science">
        <title>Life at depth: Photobacterium profundum genome sequence and expression analysis.</title>
        <authorList>
            <person name="Vezzi A."/>
            <person name="Campanaro S."/>
            <person name="D'Angelo M."/>
            <person name="Simonato F."/>
            <person name="Vitulo N."/>
            <person name="Lauro F.M."/>
            <person name="Cestaro A."/>
            <person name="Malacrida G."/>
            <person name="Simionati B."/>
            <person name="Cannata N."/>
            <person name="Romualdi C."/>
            <person name="Bartlett D.H."/>
            <person name="Valle G."/>
        </authorList>
    </citation>
    <scope>NUCLEOTIDE SEQUENCE [LARGE SCALE GENOMIC DNA]</scope>
    <source>
        <strain>ATCC BAA-1253 / SS9</strain>
    </source>
</reference>
<sequence length="420" mass="44286">MMQKFRIQGGGPLSGEVSISGAKNAALPILFASLLAEKPVEIANVPKLRDIDTTMELLGRLGVNITRNGSVFIDASGVNEFCAPYDLVKTMRASIWALGPLVARFGQGQVSLPGGCAIGARPVDLHIHGLEQLGATITLEEGYVKASVDGRLKGAHIVMDKVSVGATVTIMSAATLAEGTTVIENAAREPEIVDTADFLNAIGAKVTGAGTDTITIEGVERLGGGYHEVVADRIETGTFLVAAAVSGGKILCRNTRPALLEAVLAKLEEAGAAIETGDDWISIDMTDRELKAVNIRTAPHPGFPTDMQAQFSLLNLVAKGTGIITETIFENRFMHIPELIRMGARAEIEGNTVICGDTDGGLSGAQVMATDLRASASLVIAGSIAEGETIVDRIYHIDRGYEYIEGKFSALGMNIERISE</sequence>